<evidence type="ECO:0000255" key="1">
    <source>
        <dbReference type="HAMAP-Rule" id="MF_01554"/>
    </source>
</evidence>
<reference key="1">
    <citation type="submission" date="2005-09" db="EMBL/GenBank/DDBJ databases">
        <title>Complete genome sequence of Clostridium kluyveri and comparative genomics of Clostridia species.</title>
        <authorList>
            <person name="Inui M."/>
            <person name="Nonaka H."/>
            <person name="Shinoda Y."/>
            <person name="Ikenaga Y."/>
            <person name="Abe M."/>
            <person name="Naito K."/>
            <person name="Vertes A.A."/>
            <person name="Yukawa H."/>
        </authorList>
    </citation>
    <scope>NUCLEOTIDE SEQUENCE [LARGE SCALE GENOMIC DNA]</scope>
    <source>
        <strain>NBRC 12016</strain>
    </source>
</reference>
<dbReference type="EC" id="5.4.2.10" evidence="1"/>
<dbReference type="EMBL" id="AP009049">
    <property type="protein sequence ID" value="BAH05318.1"/>
    <property type="molecule type" value="Genomic_DNA"/>
</dbReference>
<dbReference type="RefSeq" id="WP_011988885.1">
    <property type="nucleotide sequence ID" value="NC_011837.1"/>
</dbReference>
<dbReference type="SMR" id="B9DYJ3"/>
<dbReference type="KEGG" id="ckr:CKR_0267"/>
<dbReference type="HOGENOM" id="CLU_016950_7_0_9"/>
<dbReference type="Proteomes" id="UP000007969">
    <property type="component" value="Chromosome"/>
</dbReference>
<dbReference type="GO" id="GO:0005829">
    <property type="term" value="C:cytosol"/>
    <property type="evidence" value="ECO:0007669"/>
    <property type="project" value="TreeGrafter"/>
</dbReference>
<dbReference type="GO" id="GO:0000287">
    <property type="term" value="F:magnesium ion binding"/>
    <property type="evidence" value="ECO:0007669"/>
    <property type="project" value="UniProtKB-UniRule"/>
</dbReference>
<dbReference type="GO" id="GO:0008966">
    <property type="term" value="F:phosphoglucosamine mutase activity"/>
    <property type="evidence" value="ECO:0007669"/>
    <property type="project" value="UniProtKB-UniRule"/>
</dbReference>
<dbReference type="GO" id="GO:0004615">
    <property type="term" value="F:phosphomannomutase activity"/>
    <property type="evidence" value="ECO:0007669"/>
    <property type="project" value="TreeGrafter"/>
</dbReference>
<dbReference type="GO" id="GO:0005975">
    <property type="term" value="P:carbohydrate metabolic process"/>
    <property type="evidence" value="ECO:0007669"/>
    <property type="project" value="InterPro"/>
</dbReference>
<dbReference type="GO" id="GO:0009252">
    <property type="term" value="P:peptidoglycan biosynthetic process"/>
    <property type="evidence" value="ECO:0007669"/>
    <property type="project" value="TreeGrafter"/>
</dbReference>
<dbReference type="GO" id="GO:0006048">
    <property type="term" value="P:UDP-N-acetylglucosamine biosynthetic process"/>
    <property type="evidence" value="ECO:0007669"/>
    <property type="project" value="TreeGrafter"/>
</dbReference>
<dbReference type="CDD" id="cd05802">
    <property type="entry name" value="GlmM"/>
    <property type="match status" value="1"/>
</dbReference>
<dbReference type="FunFam" id="3.30.310.50:FF:000001">
    <property type="entry name" value="Phosphoglucosamine mutase"/>
    <property type="match status" value="1"/>
</dbReference>
<dbReference type="FunFam" id="3.40.120.10:FF:000001">
    <property type="entry name" value="Phosphoglucosamine mutase"/>
    <property type="match status" value="1"/>
</dbReference>
<dbReference type="FunFam" id="3.40.120.10:FF:000002">
    <property type="entry name" value="Phosphoglucosamine mutase"/>
    <property type="match status" value="1"/>
</dbReference>
<dbReference type="Gene3D" id="3.40.120.10">
    <property type="entry name" value="Alpha-D-Glucose-1,6-Bisphosphate, subunit A, domain 3"/>
    <property type="match status" value="3"/>
</dbReference>
<dbReference type="Gene3D" id="3.30.310.50">
    <property type="entry name" value="Alpha-D-phosphohexomutase, C-terminal domain"/>
    <property type="match status" value="1"/>
</dbReference>
<dbReference type="HAMAP" id="MF_01554_B">
    <property type="entry name" value="GlmM_B"/>
    <property type="match status" value="1"/>
</dbReference>
<dbReference type="InterPro" id="IPR005844">
    <property type="entry name" value="A-D-PHexomutase_a/b/a-I"/>
</dbReference>
<dbReference type="InterPro" id="IPR016055">
    <property type="entry name" value="A-D-PHexomutase_a/b/a-I/II/III"/>
</dbReference>
<dbReference type="InterPro" id="IPR005845">
    <property type="entry name" value="A-D-PHexomutase_a/b/a-II"/>
</dbReference>
<dbReference type="InterPro" id="IPR005846">
    <property type="entry name" value="A-D-PHexomutase_a/b/a-III"/>
</dbReference>
<dbReference type="InterPro" id="IPR005843">
    <property type="entry name" value="A-D-PHexomutase_C"/>
</dbReference>
<dbReference type="InterPro" id="IPR036900">
    <property type="entry name" value="A-D-PHexomutase_C_sf"/>
</dbReference>
<dbReference type="InterPro" id="IPR016066">
    <property type="entry name" value="A-D-PHexomutase_CS"/>
</dbReference>
<dbReference type="InterPro" id="IPR005841">
    <property type="entry name" value="Alpha-D-phosphohexomutase_SF"/>
</dbReference>
<dbReference type="InterPro" id="IPR006352">
    <property type="entry name" value="GlmM_bact"/>
</dbReference>
<dbReference type="InterPro" id="IPR050060">
    <property type="entry name" value="Phosphoglucosamine_mutase"/>
</dbReference>
<dbReference type="NCBIfam" id="TIGR01455">
    <property type="entry name" value="glmM"/>
    <property type="match status" value="1"/>
</dbReference>
<dbReference type="NCBIfam" id="NF008139">
    <property type="entry name" value="PRK10887.1"/>
    <property type="match status" value="1"/>
</dbReference>
<dbReference type="PANTHER" id="PTHR42946:SF1">
    <property type="entry name" value="PHOSPHOGLUCOMUTASE (ALPHA-D-GLUCOSE-1,6-BISPHOSPHATE-DEPENDENT)"/>
    <property type="match status" value="1"/>
</dbReference>
<dbReference type="PANTHER" id="PTHR42946">
    <property type="entry name" value="PHOSPHOHEXOSE MUTASE"/>
    <property type="match status" value="1"/>
</dbReference>
<dbReference type="Pfam" id="PF02878">
    <property type="entry name" value="PGM_PMM_I"/>
    <property type="match status" value="1"/>
</dbReference>
<dbReference type="Pfam" id="PF02879">
    <property type="entry name" value="PGM_PMM_II"/>
    <property type="match status" value="1"/>
</dbReference>
<dbReference type="Pfam" id="PF02880">
    <property type="entry name" value="PGM_PMM_III"/>
    <property type="match status" value="1"/>
</dbReference>
<dbReference type="Pfam" id="PF00408">
    <property type="entry name" value="PGM_PMM_IV"/>
    <property type="match status" value="1"/>
</dbReference>
<dbReference type="PRINTS" id="PR00509">
    <property type="entry name" value="PGMPMM"/>
</dbReference>
<dbReference type="SUPFAM" id="SSF55957">
    <property type="entry name" value="Phosphoglucomutase, C-terminal domain"/>
    <property type="match status" value="1"/>
</dbReference>
<dbReference type="SUPFAM" id="SSF53738">
    <property type="entry name" value="Phosphoglucomutase, first 3 domains"/>
    <property type="match status" value="3"/>
</dbReference>
<dbReference type="PROSITE" id="PS00710">
    <property type="entry name" value="PGM_PMM"/>
    <property type="match status" value="1"/>
</dbReference>
<proteinExistence type="inferred from homology"/>
<accession>B9DYJ3</accession>
<name>GLMM_CLOK1</name>
<organism>
    <name type="scientific">Clostridium kluyveri (strain NBRC 12016)</name>
    <dbReference type="NCBI Taxonomy" id="583346"/>
    <lineage>
        <taxon>Bacteria</taxon>
        <taxon>Bacillati</taxon>
        <taxon>Bacillota</taxon>
        <taxon>Clostridia</taxon>
        <taxon>Eubacteriales</taxon>
        <taxon>Clostridiaceae</taxon>
        <taxon>Clostridium</taxon>
    </lineage>
</organism>
<protein>
    <recommendedName>
        <fullName evidence="1">Phosphoglucosamine mutase</fullName>
        <ecNumber evidence="1">5.4.2.10</ecNumber>
    </recommendedName>
</protein>
<sequence length="449" mass="49185">MHRMFGTDGVRGIANKELTPELAYKLGKAGAYVLTGRCHKPKILVGMDTRISGDMLENALVSGILSIGAEAICVGIVPTPAVAYLTRKYNADAGVVISASHNPVEYNGIKFFNGKGYKLSDELEDKIQYVIESNFKDVSIPIGSKVGRKIMETGEARKAYIEFAKSTIDTDLKDLKVVLDCANGASYVTSVKAFQELGAKVKVINNEPDGININHNCGSTHPENLMKTVVEEGYDMGLAFDGDADRCLAIDEKGNLINGDFIMAIIAKHLKNQGKLYKNVVVSTVMSNVGFDIALKEEGINTIKTQVGDRYVLEEMRKEGYKLGGEQSGHIIMLDYNTTGDGLITALQIACIVKKSGRKLSDIASMMKNLPQTLVNAKVPDDKKKIYMEDEEIVLKIKEIERKLHGCGRVLIRPSGTEPLVRVMLEGEEQGEIDKMAHNLAELIEVKLN</sequence>
<gene>
    <name evidence="1" type="primary">glmM</name>
    <name type="ordered locus">CKR_0267</name>
</gene>
<feature type="chain" id="PRO_1000185361" description="Phosphoglucosamine mutase">
    <location>
        <begin position="1"/>
        <end position="449"/>
    </location>
</feature>
<feature type="active site" description="Phosphoserine intermediate" evidence="1">
    <location>
        <position position="100"/>
    </location>
</feature>
<feature type="binding site" description="via phosphate group" evidence="1">
    <location>
        <position position="100"/>
    </location>
    <ligand>
        <name>Mg(2+)</name>
        <dbReference type="ChEBI" id="CHEBI:18420"/>
    </ligand>
</feature>
<feature type="binding site" evidence="1">
    <location>
        <position position="241"/>
    </location>
    <ligand>
        <name>Mg(2+)</name>
        <dbReference type="ChEBI" id="CHEBI:18420"/>
    </ligand>
</feature>
<feature type="binding site" evidence="1">
    <location>
        <position position="243"/>
    </location>
    <ligand>
        <name>Mg(2+)</name>
        <dbReference type="ChEBI" id="CHEBI:18420"/>
    </ligand>
</feature>
<feature type="binding site" evidence="1">
    <location>
        <position position="245"/>
    </location>
    <ligand>
        <name>Mg(2+)</name>
        <dbReference type="ChEBI" id="CHEBI:18420"/>
    </ligand>
</feature>
<feature type="modified residue" description="Phosphoserine" evidence="1">
    <location>
        <position position="100"/>
    </location>
</feature>
<keyword id="KW-0413">Isomerase</keyword>
<keyword id="KW-0460">Magnesium</keyword>
<keyword id="KW-0479">Metal-binding</keyword>
<keyword id="KW-0597">Phosphoprotein</keyword>
<comment type="function">
    <text evidence="1">Catalyzes the conversion of glucosamine-6-phosphate to glucosamine-1-phosphate.</text>
</comment>
<comment type="catalytic activity">
    <reaction evidence="1">
        <text>alpha-D-glucosamine 1-phosphate = D-glucosamine 6-phosphate</text>
        <dbReference type="Rhea" id="RHEA:23424"/>
        <dbReference type="ChEBI" id="CHEBI:58516"/>
        <dbReference type="ChEBI" id="CHEBI:58725"/>
        <dbReference type="EC" id="5.4.2.10"/>
    </reaction>
</comment>
<comment type="cofactor">
    <cofactor evidence="1">
        <name>Mg(2+)</name>
        <dbReference type="ChEBI" id="CHEBI:18420"/>
    </cofactor>
    <text evidence="1">Binds 1 Mg(2+) ion per subunit.</text>
</comment>
<comment type="PTM">
    <text evidence="1">Activated by phosphorylation.</text>
</comment>
<comment type="similarity">
    <text evidence="1">Belongs to the phosphohexose mutase family.</text>
</comment>